<keyword id="KW-0378">Hydrolase</keyword>
<reference key="1">
    <citation type="submission" date="2007-11" db="EMBL/GenBank/DDBJ databases">
        <title>The genome sequence of the hyperthermophilic bacterium Thermotoga neapolitana.</title>
        <authorList>
            <person name="Lim S.K."/>
            <person name="Kim J.S."/>
            <person name="Cha S.H."/>
            <person name="Park B.C."/>
            <person name="Lee D.S."/>
            <person name="Tae H.S."/>
            <person name="Kim S.-J."/>
            <person name="Kim J.J."/>
            <person name="Park K.J."/>
            <person name="Lee S.Y."/>
        </authorList>
    </citation>
    <scope>NUCLEOTIDE SEQUENCE [LARGE SCALE GENOMIC DNA]</scope>
    <source>
        <strain>ATCC 49049 / DSM 4359 / NBRC 107923 / NS-E</strain>
    </source>
</reference>
<feature type="chain" id="PRO_1000197819" description="UPF0173 metal-dependent hydrolase CTN_1413">
    <location>
        <begin position="1"/>
        <end position="226"/>
    </location>
</feature>
<name>Y1413_THENN</name>
<gene>
    <name type="ordered locus">CTN_1413</name>
</gene>
<dbReference type="EMBL" id="CP000916">
    <property type="protein sequence ID" value="ACM23589.1"/>
    <property type="molecule type" value="Genomic_DNA"/>
</dbReference>
<dbReference type="RefSeq" id="WP_015919883.1">
    <property type="nucleotide sequence ID" value="NC_011978.1"/>
</dbReference>
<dbReference type="SMR" id="B9K9F6"/>
<dbReference type="STRING" id="309803.CTN_1413"/>
<dbReference type="KEGG" id="tna:CTN_1413"/>
<dbReference type="eggNOG" id="COG2220">
    <property type="taxonomic scope" value="Bacteria"/>
</dbReference>
<dbReference type="HOGENOM" id="CLU_070010_4_1_0"/>
<dbReference type="Proteomes" id="UP000000445">
    <property type="component" value="Chromosome"/>
</dbReference>
<dbReference type="GO" id="GO:0016787">
    <property type="term" value="F:hydrolase activity"/>
    <property type="evidence" value="ECO:0007669"/>
    <property type="project" value="UniProtKB-UniRule"/>
</dbReference>
<dbReference type="Gene3D" id="3.60.15.10">
    <property type="entry name" value="Ribonuclease Z/Hydroxyacylglutathione hydrolase-like"/>
    <property type="match status" value="1"/>
</dbReference>
<dbReference type="HAMAP" id="MF_00457">
    <property type="entry name" value="UPF0173"/>
    <property type="match status" value="1"/>
</dbReference>
<dbReference type="InterPro" id="IPR001279">
    <property type="entry name" value="Metallo-B-lactamas"/>
</dbReference>
<dbReference type="InterPro" id="IPR036866">
    <property type="entry name" value="RibonucZ/Hydroxyglut_hydro"/>
</dbReference>
<dbReference type="InterPro" id="IPR022877">
    <property type="entry name" value="UPF0173"/>
</dbReference>
<dbReference type="InterPro" id="IPR050114">
    <property type="entry name" value="UPF0173_UPF0282_UlaG_hydrolase"/>
</dbReference>
<dbReference type="NCBIfam" id="NF001911">
    <property type="entry name" value="PRK00685.1"/>
    <property type="match status" value="1"/>
</dbReference>
<dbReference type="PANTHER" id="PTHR43546:SF3">
    <property type="entry name" value="UPF0173 METAL-DEPENDENT HYDROLASE MJ1163"/>
    <property type="match status" value="1"/>
</dbReference>
<dbReference type="PANTHER" id="PTHR43546">
    <property type="entry name" value="UPF0173 METAL-DEPENDENT HYDROLASE MJ1163-RELATED"/>
    <property type="match status" value="1"/>
</dbReference>
<dbReference type="Pfam" id="PF12706">
    <property type="entry name" value="Lactamase_B_2"/>
    <property type="match status" value="1"/>
</dbReference>
<dbReference type="SMART" id="SM00849">
    <property type="entry name" value="Lactamase_B"/>
    <property type="match status" value="1"/>
</dbReference>
<dbReference type="SUPFAM" id="SSF56281">
    <property type="entry name" value="Metallo-hydrolase/oxidoreductase"/>
    <property type="match status" value="1"/>
</dbReference>
<proteinExistence type="inferred from homology"/>
<accession>B9K9F6</accession>
<protein>
    <recommendedName>
        <fullName evidence="1">UPF0173 metal-dependent hydrolase CTN_1413</fullName>
    </recommendedName>
</protein>
<evidence type="ECO:0000255" key="1">
    <source>
        <dbReference type="HAMAP-Rule" id="MF_00457"/>
    </source>
</evidence>
<organism>
    <name type="scientific">Thermotoga neapolitana (strain ATCC 49049 / DSM 4359 / NBRC 107923 / NS-E)</name>
    <dbReference type="NCBI Taxonomy" id="309803"/>
    <lineage>
        <taxon>Bacteria</taxon>
        <taxon>Thermotogati</taxon>
        <taxon>Thermotogota</taxon>
        <taxon>Thermotogae</taxon>
        <taxon>Thermotogales</taxon>
        <taxon>Thermotogaceae</taxon>
        <taxon>Thermotoga</taxon>
    </lineage>
</organism>
<comment type="similarity">
    <text evidence="1">Belongs to the UPF0173 family.</text>
</comment>
<sequence length="226" mass="24691">MKITFLGHAAVLVEGKKNLIIDPFITGNPACPVKLEDLPKIDYILVTHGHGDHLGDAVEIAKKNDAIVISNYEICQYLGKKGVKTHAMHIGGSYLFDFGRVKMTPAVHGSGILDGENIIYGGNPGGFLITLEGKKIYHAGDTGLTKDMELLKEENVDVAFLPIGGNFVMDVEDAIRAVSMISPRKVVPMHYGTWEIIFADVELFKKKVEEMGVECVILEPGESLEL</sequence>